<reference key="1">
    <citation type="journal article" date="2001" name="Science">
        <title>Complete genome sequence of a virulent isolate of Streptococcus pneumoniae.</title>
        <authorList>
            <person name="Tettelin H."/>
            <person name="Nelson K.E."/>
            <person name="Paulsen I.T."/>
            <person name="Eisen J.A."/>
            <person name="Read T.D."/>
            <person name="Peterson S.N."/>
            <person name="Heidelberg J.F."/>
            <person name="DeBoy R.T."/>
            <person name="Haft D.H."/>
            <person name="Dodson R.J."/>
            <person name="Durkin A.S."/>
            <person name="Gwinn M.L."/>
            <person name="Kolonay J.F."/>
            <person name="Nelson W.C."/>
            <person name="Peterson J.D."/>
            <person name="Umayam L.A."/>
            <person name="White O."/>
            <person name="Salzberg S.L."/>
            <person name="Lewis M.R."/>
            <person name="Radune D."/>
            <person name="Holtzapple E.K."/>
            <person name="Khouri H.M."/>
            <person name="Wolf A.M."/>
            <person name="Utterback T.R."/>
            <person name="Hansen C.L."/>
            <person name="McDonald L.A."/>
            <person name="Feldblyum T.V."/>
            <person name="Angiuoli S.V."/>
            <person name="Dickinson T."/>
            <person name="Hickey E.K."/>
            <person name="Holt I.E."/>
            <person name="Loftus B.J."/>
            <person name="Yang F."/>
            <person name="Smith H.O."/>
            <person name="Venter J.C."/>
            <person name="Dougherty B.A."/>
            <person name="Morrison D.A."/>
            <person name="Hollingshead S.K."/>
            <person name="Fraser C.M."/>
        </authorList>
    </citation>
    <scope>NUCLEOTIDE SEQUENCE [LARGE SCALE GENOMIC DNA]</scope>
    <source>
        <strain>ATCC BAA-334 / TIGR4</strain>
    </source>
</reference>
<sequence>MSFTVAVKEEILGQHHLSWHELSAIIKMSGSIGLSTSGLTLSVVTENAKLARHLYESFLHLYEIKSEIRHHQRSNLRKNRVYTVFTDEKVQDLLSDLHLADSFFGLETGIDEAILSDEEAGRAYLCGAFLANGSIRDPESGKYQLEISSVYLDHAQGIASLLQQFLLDAKVLERKKGAVTYLQRAEDIMDFLIVIGAMQARDDFERVKILRETRNDLNRANNAETANIARTVSASMKTINNISKIKDIMGLENLPVDLQEVAQLRIQHPDYSIQQLADSLSTPLTKSGVNHRLRKINKIADEL</sequence>
<gene>
    <name evidence="1" type="primary">whiA</name>
    <name type="ordered locus">SP_1564</name>
</gene>
<proteinExistence type="inferred from homology"/>
<feature type="chain" id="PRO_0000376576" description="Probable cell division protein WhiA">
    <location>
        <begin position="1"/>
        <end position="303"/>
    </location>
</feature>
<feature type="DNA-binding region" description="H-T-H motif" evidence="1">
    <location>
        <begin position="272"/>
        <end position="303"/>
    </location>
</feature>
<evidence type="ECO:0000255" key="1">
    <source>
        <dbReference type="HAMAP-Rule" id="MF_01420"/>
    </source>
</evidence>
<keyword id="KW-0131">Cell cycle</keyword>
<keyword id="KW-0132">Cell division</keyword>
<keyword id="KW-0238">DNA-binding</keyword>
<keyword id="KW-1185">Reference proteome</keyword>
<comment type="function">
    <text evidence="1">Involved in cell division and chromosome segregation.</text>
</comment>
<comment type="similarity">
    <text evidence="1">Belongs to the WhiA family.</text>
</comment>
<accession>Q97PN9</accession>
<organism>
    <name type="scientific">Streptococcus pneumoniae serotype 4 (strain ATCC BAA-334 / TIGR4)</name>
    <dbReference type="NCBI Taxonomy" id="170187"/>
    <lineage>
        <taxon>Bacteria</taxon>
        <taxon>Bacillati</taxon>
        <taxon>Bacillota</taxon>
        <taxon>Bacilli</taxon>
        <taxon>Lactobacillales</taxon>
        <taxon>Streptococcaceae</taxon>
        <taxon>Streptococcus</taxon>
    </lineage>
</organism>
<dbReference type="EMBL" id="AE005672">
    <property type="protein sequence ID" value="AAK75651.1"/>
    <property type="molecule type" value="Genomic_DNA"/>
</dbReference>
<dbReference type="PIR" id="B95182">
    <property type="entry name" value="B95182"/>
</dbReference>
<dbReference type="RefSeq" id="WP_000011310.1">
    <property type="nucleotide sequence ID" value="NZ_CP155539.1"/>
</dbReference>
<dbReference type="SMR" id="Q97PN9"/>
<dbReference type="PaxDb" id="170187-SP_1564"/>
<dbReference type="EnsemblBacteria" id="AAK75651">
    <property type="protein sequence ID" value="AAK75651"/>
    <property type="gene ID" value="SP_1564"/>
</dbReference>
<dbReference type="KEGG" id="spn:SP_1564"/>
<dbReference type="eggNOG" id="COG1481">
    <property type="taxonomic scope" value="Bacteria"/>
</dbReference>
<dbReference type="PhylomeDB" id="Q97PN9"/>
<dbReference type="BioCyc" id="SPNE170187:G1FZB-1583-MONOMER"/>
<dbReference type="Proteomes" id="UP000000585">
    <property type="component" value="Chromosome"/>
</dbReference>
<dbReference type="GO" id="GO:0003677">
    <property type="term" value="F:DNA binding"/>
    <property type="evidence" value="ECO:0007669"/>
    <property type="project" value="UniProtKB-UniRule"/>
</dbReference>
<dbReference type="GO" id="GO:0051301">
    <property type="term" value="P:cell division"/>
    <property type="evidence" value="ECO:0007669"/>
    <property type="project" value="UniProtKB-UniRule"/>
</dbReference>
<dbReference type="GO" id="GO:0043937">
    <property type="term" value="P:regulation of sporulation"/>
    <property type="evidence" value="ECO:0007669"/>
    <property type="project" value="InterPro"/>
</dbReference>
<dbReference type="FunFam" id="3.10.28.10:FF:000004">
    <property type="entry name" value="Probable cell division protein WhiA"/>
    <property type="match status" value="1"/>
</dbReference>
<dbReference type="Gene3D" id="3.10.28.10">
    <property type="entry name" value="Homing endonucleases"/>
    <property type="match status" value="1"/>
</dbReference>
<dbReference type="HAMAP" id="MF_01420">
    <property type="entry name" value="HTH_type_WhiA"/>
    <property type="match status" value="1"/>
</dbReference>
<dbReference type="InterPro" id="IPR027434">
    <property type="entry name" value="Homing_endonucl"/>
</dbReference>
<dbReference type="InterPro" id="IPR018478">
    <property type="entry name" value="Sporu_reg_WhiA_N_dom"/>
</dbReference>
<dbReference type="InterPro" id="IPR003802">
    <property type="entry name" value="Sporulation_regulator_WhiA"/>
</dbReference>
<dbReference type="InterPro" id="IPR023054">
    <property type="entry name" value="Sporulation_regulator_WhiA_C"/>
</dbReference>
<dbReference type="InterPro" id="IPR039518">
    <property type="entry name" value="WhiA_LAGLIDADG_dom"/>
</dbReference>
<dbReference type="NCBIfam" id="TIGR00647">
    <property type="entry name" value="DNA_bind_WhiA"/>
    <property type="match status" value="1"/>
</dbReference>
<dbReference type="PANTHER" id="PTHR37307">
    <property type="entry name" value="CELL DIVISION PROTEIN WHIA-RELATED"/>
    <property type="match status" value="1"/>
</dbReference>
<dbReference type="PANTHER" id="PTHR37307:SF1">
    <property type="entry name" value="CELL DIVISION PROTEIN WHIA-RELATED"/>
    <property type="match status" value="1"/>
</dbReference>
<dbReference type="Pfam" id="PF02650">
    <property type="entry name" value="HTH_WhiA"/>
    <property type="match status" value="1"/>
</dbReference>
<dbReference type="Pfam" id="PF14527">
    <property type="entry name" value="LAGLIDADG_WhiA"/>
    <property type="match status" value="1"/>
</dbReference>
<dbReference type="Pfam" id="PF10298">
    <property type="entry name" value="WhiA_N"/>
    <property type="match status" value="1"/>
</dbReference>
<dbReference type="SUPFAM" id="SSF55608">
    <property type="entry name" value="Homing endonucleases"/>
    <property type="match status" value="1"/>
</dbReference>
<protein>
    <recommendedName>
        <fullName evidence="1">Probable cell division protein WhiA</fullName>
    </recommendedName>
</protein>
<name>WHIA_STRPN</name>